<dbReference type="EC" id="1.2.1.38" evidence="1"/>
<dbReference type="EMBL" id="CP000116">
    <property type="protein sequence ID" value="AAZ96408.1"/>
    <property type="molecule type" value="Genomic_DNA"/>
</dbReference>
<dbReference type="RefSeq" id="WP_011310967.1">
    <property type="nucleotide sequence ID" value="NC_007404.1"/>
</dbReference>
<dbReference type="SMR" id="Q3SF19"/>
<dbReference type="STRING" id="292415.Tbd_0455"/>
<dbReference type="KEGG" id="tbd:Tbd_0455"/>
<dbReference type="eggNOG" id="COG0002">
    <property type="taxonomic scope" value="Bacteria"/>
</dbReference>
<dbReference type="HOGENOM" id="CLU_006384_0_1_4"/>
<dbReference type="OrthoDB" id="9801289at2"/>
<dbReference type="UniPathway" id="UPA00068">
    <property type="reaction ID" value="UER00108"/>
</dbReference>
<dbReference type="Proteomes" id="UP000008291">
    <property type="component" value="Chromosome"/>
</dbReference>
<dbReference type="GO" id="GO:0005737">
    <property type="term" value="C:cytoplasm"/>
    <property type="evidence" value="ECO:0007669"/>
    <property type="project" value="UniProtKB-SubCell"/>
</dbReference>
<dbReference type="GO" id="GO:0003942">
    <property type="term" value="F:N-acetyl-gamma-glutamyl-phosphate reductase activity"/>
    <property type="evidence" value="ECO:0007669"/>
    <property type="project" value="UniProtKB-UniRule"/>
</dbReference>
<dbReference type="GO" id="GO:0051287">
    <property type="term" value="F:NAD binding"/>
    <property type="evidence" value="ECO:0007669"/>
    <property type="project" value="InterPro"/>
</dbReference>
<dbReference type="GO" id="GO:0070401">
    <property type="term" value="F:NADP+ binding"/>
    <property type="evidence" value="ECO:0007669"/>
    <property type="project" value="InterPro"/>
</dbReference>
<dbReference type="GO" id="GO:0006526">
    <property type="term" value="P:L-arginine biosynthetic process"/>
    <property type="evidence" value="ECO:0007669"/>
    <property type="project" value="UniProtKB-UniRule"/>
</dbReference>
<dbReference type="CDD" id="cd23934">
    <property type="entry name" value="AGPR_1_C"/>
    <property type="match status" value="1"/>
</dbReference>
<dbReference type="CDD" id="cd17895">
    <property type="entry name" value="AGPR_1_N"/>
    <property type="match status" value="1"/>
</dbReference>
<dbReference type="FunFam" id="3.30.360.10:FF:000014">
    <property type="entry name" value="N-acetyl-gamma-glutamyl-phosphate reductase"/>
    <property type="match status" value="1"/>
</dbReference>
<dbReference type="Gene3D" id="3.30.360.10">
    <property type="entry name" value="Dihydrodipicolinate Reductase, domain 2"/>
    <property type="match status" value="1"/>
</dbReference>
<dbReference type="Gene3D" id="3.40.50.720">
    <property type="entry name" value="NAD(P)-binding Rossmann-like Domain"/>
    <property type="match status" value="1"/>
</dbReference>
<dbReference type="HAMAP" id="MF_00150">
    <property type="entry name" value="ArgC_type1"/>
    <property type="match status" value="1"/>
</dbReference>
<dbReference type="InterPro" id="IPR023013">
    <property type="entry name" value="AGPR_AS"/>
</dbReference>
<dbReference type="InterPro" id="IPR000706">
    <property type="entry name" value="AGPR_type-1"/>
</dbReference>
<dbReference type="InterPro" id="IPR036291">
    <property type="entry name" value="NAD(P)-bd_dom_sf"/>
</dbReference>
<dbReference type="InterPro" id="IPR050085">
    <property type="entry name" value="NAGSA_dehydrogenase"/>
</dbReference>
<dbReference type="InterPro" id="IPR000534">
    <property type="entry name" value="Semialdehyde_DH_NAD-bd"/>
</dbReference>
<dbReference type="NCBIfam" id="TIGR01850">
    <property type="entry name" value="argC"/>
    <property type="match status" value="1"/>
</dbReference>
<dbReference type="PANTHER" id="PTHR32338:SF10">
    <property type="entry name" value="N-ACETYL-GAMMA-GLUTAMYL-PHOSPHATE REDUCTASE, CHLOROPLASTIC-RELATED"/>
    <property type="match status" value="1"/>
</dbReference>
<dbReference type="PANTHER" id="PTHR32338">
    <property type="entry name" value="N-ACETYL-GAMMA-GLUTAMYL-PHOSPHATE REDUCTASE, CHLOROPLASTIC-RELATED-RELATED"/>
    <property type="match status" value="1"/>
</dbReference>
<dbReference type="Pfam" id="PF01118">
    <property type="entry name" value="Semialdhyde_dh"/>
    <property type="match status" value="1"/>
</dbReference>
<dbReference type="Pfam" id="PF22698">
    <property type="entry name" value="Semialdhyde_dhC_1"/>
    <property type="match status" value="1"/>
</dbReference>
<dbReference type="SMART" id="SM00859">
    <property type="entry name" value="Semialdhyde_dh"/>
    <property type="match status" value="1"/>
</dbReference>
<dbReference type="SUPFAM" id="SSF55347">
    <property type="entry name" value="Glyceraldehyde-3-phosphate dehydrogenase-like, C-terminal domain"/>
    <property type="match status" value="1"/>
</dbReference>
<dbReference type="SUPFAM" id="SSF51735">
    <property type="entry name" value="NAD(P)-binding Rossmann-fold domains"/>
    <property type="match status" value="1"/>
</dbReference>
<dbReference type="PROSITE" id="PS01224">
    <property type="entry name" value="ARGC"/>
    <property type="match status" value="1"/>
</dbReference>
<feature type="chain" id="PRO_1000011077" description="N-acetyl-gamma-glutamyl-phosphate reductase">
    <location>
        <begin position="1"/>
        <end position="342"/>
    </location>
</feature>
<feature type="active site" evidence="1">
    <location>
        <position position="149"/>
    </location>
</feature>
<comment type="function">
    <text evidence="1">Catalyzes the NADPH-dependent reduction of N-acetyl-5-glutamyl phosphate to yield N-acetyl-L-glutamate 5-semialdehyde.</text>
</comment>
<comment type="catalytic activity">
    <reaction evidence="1">
        <text>N-acetyl-L-glutamate 5-semialdehyde + phosphate + NADP(+) = N-acetyl-L-glutamyl 5-phosphate + NADPH + H(+)</text>
        <dbReference type="Rhea" id="RHEA:21588"/>
        <dbReference type="ChEBI" id="CHEBI:15378"/>
        <dbReference type="ChEBI" id="CHEBI:29123"/>
        <dbReference type="ChEBI" id="CHEBI:43474"/>
        <dbReference type="ChEBI" id="CHEBI:57783"/>
        <dbReference type="ChEBI" id="CHEBI:57936"/>
        <dbReference type="ChEBI" id="CHEBI:58349"/>
        <dbReference type="EC" id="1.2.1.38"/>
    </reaction>
</comment>
<comment type="pathway">
    <text evidence="1">Amino-acid biosynthesis; L-arginine biosynthesis; N(2)-acetyl-L-ornithine from L-glutamate: step 3/4.</text>
</comment>
<comment type="subcellular location">
    <subcellularLocation>
        <location evidence="1">Cytoplasm</location>
    </subcellularLocation>
</comment>
<comment type="similarity">
    <text evidence="1">Belongs to the NAGSA dehydrogenase family. Type 1 subfamily.</text>
</comment>
<sequence length="342" mass="36693">MIKVGIVGGTGYTGVELLRLLARHPEVELKAITSRKEAGMPVADMFPNLRGRVGLAFSTPEEAGLETCDVVFFATPNGVAMQQTRALLDAGVKVIDLAADFRIKDVAEWQKWYKMEHACPDLVDEAVYGLPEINRDKIKAARLIANPGCYPTAVQLGFLPLLEAGVAETGTLIADAKSGVSGAGRKAETHILFAEAADNFKAYAVGGHRHWPEIKQGLEIFAGGPVGFTFVPHLTPLIRGIHATLYARVSADVDLQALYEKRYTDEAFVDVMPAGACPETRSVRGANVCRIAVHRQQGSDMVIVLSVIDNLVKGAAGQAVQNMNILFGLAEDTALSDVGMLP</sequence>
<name>ARGC_THIDA</name>
<evidence type="ECO:0000255" key="1">
    <source>
        <dbReference type="HAMAP-Rule" id="MF_00150"/>
    </source>
</evidence>
<reference key="1">
    <citation type="journal article" date="2006" name="J. Bacteriol.">
        <title>The genome sequence of the obligately chemolithoautotrophic, facultatively anaerobic bacterium Thiobacillus denitrificans.</title>
        <authorList>
            <person name="Beller H.R."/>
            <person name="Chain P.S."/>
            <person name="Letain T.E."/>
            <person name="Chakicherla A."/>
            <person name="Larimer F.W."/>
            <person name="Richardson P.M."/>
            <person name="Coleman M.A."/>
            <person name="Wood A.P."/>
            <person name="Kelly D.P."/>
        </authorList>
    </citation>
    <scope>NUCLEOTIDE SEQUENCE [LARGE SCALE GENOMIC DNA]</scope>
    <source>
        <strain>ATCC 25259 / T1</strain>
    </source>
</reference>
<keyword id="KW-0028">Amino-acid biosynthesis</keyword>
<keyword id="KW-0055">Arginine biosynthesis</keyword>
<keyword id="KW-0963">Cytoplasm</keyword>
<keyword id="KW-0521">NADP</keyword>
<keyword id="KW-0560">Oxidoreductase</keyword>
<keyword id="KW-1185">Reference proteome</keyword>
<gene>
    <name evidence="1" type="primary">argC</name>
    <name type="ordered locus">Tbd_0455</name>
</gene>
<organism>
    <name type="scientific">Thiobacillus denitrificans (strain ATCC 25259 / T1)</name>
    <dbReference type="NCBI Taxonomy" id="292415"/>
    <lineage>
        <taxon>Bacteria</taxon>
        <taxon>Pseudomonadati</taxon>
        <taxon>Pseudomonadota</taxon>
        <taxon>Betaproteobacteria</taxon>
        <taxon>Nitrosomonadales</taxon>
        <taxon>Thiobacillaceae</taxon>
        <taxon>Thiobacillus</taxon>
    </lineage>
</organism>
<proteinExistence type="inferred from homology"/>
<accession>Q3SF19</accession>
<protein>
    <recommendedName>
        <fullName evidence="1">N-acetyl-gamma-glutamyl-phosphate reductase</fullName>
        <shortName evidence="1">AGPR</shortName>
        <ecNumber evidence="1">1.2.1.38</ecNumber>
    </recommendedName>
    <alternativeName>
        <fullName evidence="1">N-acetyl-glutamate semialdehyde dehydrogenase</fullName>
        <shortName evidence="1">NAGSA dehydrogenase</shortName>
    </alternativeName>
</protein>